<sequence length="475" mass="52539">MNTALAQQIANEGGVEAWMIAQQHKSLLRFLTCGSVDDGKSTLIGRLLHDTRQIYEDQLSSLHNDSKRHGTQGEKLDLALLVDGLQAEREQGITIDVAYRYFSTEKRKFIIADTPGHEQYTRNMATGASTCELAILLIDARKGVLDQTRRHSFISTLLGIKHLVVAINKMDLVDYSEETFTRIREDYLTFAGQLPGNLDIRFVPLSALEGDNVASQSESMPWYSGPTLLEVLETVEIQRVVDAQPMRFPVQYVNRPNLDFRGYAGTLASGRVEVGQRVKVLPSGVESNVARIVTFDGDREEAFAGEAITLVLTDEIDISRGDLLLAADEALPAVQSASVDVVWMAEQPLSPGQSYDIKIAGKKTRARVDGIHYQVDINNLTQREVENLPLNGIGLVDLTFDEPLVLDRYQQNPVTGGLIFIDRLSNVTVGAGMVHEPVSQATAAPSEFSAFELELNALVRRHFPHWGARDLLGDK</sequence>
<organism>
    <name type="scientific">Escherichia coli O45:K1 (strain S88 / ExPEC)</name>
    <dbReference type="NCBI Taxonomy" id="585035"/>
    <lineage>
        <taxon>Bacteria</taxon>
        <taxon>Pseudomonadati</taxon>
        <taxon>Pseudomonadota</taxon>
        <taxon>Gammaproteobacteria</taxon>
        <taxon>Enterobacterales</taxon>
        <taxon>Enterobacteriaceae</taxon>
        <taxon>Escherichia</taxon>
    </lineage>
</organism>
<gene>
    <name evidence="2" type="primary">cysN</name>
    <name type="ordered locus">ECS88_3022</name>
</gene>
<reference key="1">
    <citation type="journal article" date="2009" name="PLoS Genet.">
        <title>Organised genome dynamics in the Escherichia coli species results in highly diverse adaptive paths.</title>
        <authorList>
            <person name="Touchon M."/>
            <person name="Hoede C."/>
            <person name="Tenaillon O."/>
            <person name="Barbe V."/>
            <person name="Baeriswyl S."/>
            <person name="Bidet P."/>
            <person name="Bingen E."/>
            <person name="Bonacorsi S."/>
            <person name="Bouchier C."/>
            <person name="Bouvet O."/>
            <person name="Calteau A."/>
            <person name="Chiapello H."/>
            <person name="Clermont O."/>
            <person name="Cruveiller S."/>
            <person name="Danchin A."/>
            <person name="Diard M."/>
            <person name="Dossat C."/>
            <person name="Karoui M.E."/>
            <person name="Frapy E."/>
            <person name="Garry L."/>
            <person name="Ghigo J.M."/>
            <person name="Gilles A.M."/>
            <person name="Johnson J."/>
            <person name="Le Bouguenec C."/>
            <person name="Lescat M."/>
            <person name="Mangenot S."/>
            <person name="Martinez-Jehanne V."/>
            <person name="Matic I."/>
            <person name="Nassif X."/>
            <person name="Oztas S."/>
            <person name="Petit M.A."/>
            <person name="Pichon C."/>
            <person name="Rouy Z."/>
            <person name="Ruf C.S."/>
            <person name="Schneider D."/>
            <person name="Tourret J."/>
            <person name="Vacherie B."/>
            <person name="Vallenet D."/>
            <person name="Medigue C."/>
            <person name="Rocha E.P.C."/>
            <person name="Denamur E."/>
        </authorList>
    </citation>
    <scope>NUCLEOTIDE SEQUENCE [LARGE SCALE GENOMIC DNA]</scope>
    <source>
        <strain>S88 / ExPEC</strain>
    </source>
</reference>
<accession>B7MKM5</accession>
<comment type="function">
    <text evidence="2">With CysD forms the ATP sulfurylase (ATPS) that catalyzes the adenylation of sulfate producing adenosine 5'-phosphosulfate (APS) and diphosphate, the first enzymatic step in sulfur assimilation pathway. APS synthesis involves the formation of a high-energy phosphoric-sulfuric acid anhydride bond driven by GTP hydrolysis by CysN coupled to ATP hydrolysis by CysD.</text>
</comment>
<comment type="catalytic activity">
    <reaction evidence="2">
        <text>sulfate + ATP + H(+) = adenosine 5'-phosphosulfate + diphosphate</text>
        <dbReference type="Rhea" id="RHEA:18133"/>
        <dbReference type="ChEBI" id="CHEBI:15378"/>
        <dbReference type="ChEBI" id="CHEBI:16189"/>
        <dbReference type="ChEBI" id="CHEBI:30616"/>
        <dbReference type="ChEBI" id="CHEBI:33019"/>
        <dbReference type="ChEBI" id="CHEBI:58243"/>
        <dbReference type="EC" id="2.7.7.4"/>
    </reaction>
</comment>
<comment type="pathway">
    <text evidence="2">Sulfur metabolism; hydrogen sulfide biosynthesis; sulfite from sulfate: step 1/3.</text>
</comment>
<comment type="subunit">
    <text evidence="2">Heterodimer composed of CysD, the smaller subunit, and CysN.</text>
</comment>
<comment type="similarity">
    <text evidence="2">Belongs to the TRAFAC class translation factor GTPase superfamily. Classic translation factor GTPase family. CysN/NodQ subfamily.</text>
</comment>
<evidence type="ECO:0000250" key="1"/>
<evidence type="ECO:0000255" key="2">
    <source>
        <dbReference type="HAMAP-Rule" id="MF_00062"/>
    </source>
</evidence>
<proteinExistence type="inferred from homology"/>
<keyword id="KW-0067">ATP-binding</keyword>
<keyword id="KW-0342">GTP-binding</keyword>
<keyword id="KW-0547">Nucleotide-binding</keyword>
<keyword id="KW-0548">Nucleotidyltransferase</keyword>
<keyword id="KW-1185">Reference proteome</keyword>
<keyword id="KW-0808">Transferase</keyword>
<name>CYSN_ECO45</name>
<feature type="chain" id="PRO_1000116937" description="Sulfate adenylyltransferase subunit 1">
    <location>
        <begin position="1"/>
        <end position="475"/>
    </location>
</feature>
<feature type="domain" description="tr-type G">
    <location>
        <begin position="25"/>
        <end position="239"/>
    </location>
</feature>
<feature type="region of interest" description="G1" evidence="1">
    <location>
        <begin position="34"/>
        <end position="41"/>
    </location>
</feature>
<feature type="region of interest" description="G2" evidence="1">
    <location>
        <begin position="92"/>
        <end position="96"/>
    </location>
</feature>
<feature type="region of interest" description="G3" evidence="1">
    <location>
        <begin position="113"/>
        <end position="116"/>
    </location>
</feature>
<feature type="region of interest" description="G4" evidence="1">
    <location>
        <begin position="168"/>
        <end position="171"/>
    </location>
</feature>
<feature type="region of interest" description="G5" evidence="1">
    <location>
        <begin position="206"/>
        <end position="208"/>
    </location>
</feature>
<feature type="binding site" evidence="2">
    <location>
        <begin position="34"/>
        <end position="41"/>
    </location>
    <ligand>
        <name>GTP</name>
        <dbReference type="ChEBI" id="CHEBI:37565"/>
    </ligand>
</feature>
<feature type="binding site" evidence="2">
    <location>
        <begin position="113"/>
        <end position="117"/>
    </location>
    <ligand>
        <name>GTP</name>
        <dbReference type="ChEBI" id="CHEBI:37565"/>
    </ligand>
</feature>
<feature type="binding site" evidence="2">
    <location>
        <begin position="168"/>
        <end position="171"/>
    </location>
    <ligand>
        <name>GTP</name>
        <dbReference type="ChEBI" id="CHEBI:37565"/>
    </ligand>
</feature>
<protein>
    <recommendedName>
        <fullName evidence="2">Sulfate adenylyltransferase subunit 1</fullName>
        <ecNumber evidence="2">2.7.7.4</ecNumber>
    </recommendedName>
    <alternativeName>
        <fullName evidence="2">ATP-sulfurylase large subunit</fullName>
    </alternativeName>
    <alternativeName>
        <fullName evidence="2">Sulfate adenylate transferase</fullName>
        <shortName evidence="2">SAT</shortName>
    </alternativeName>
</protein>
<dbReference type="EC" id="2.7.7.4" evidence="2"/>
<dbReference type="EMBL" id="CU928161">
    <property type="protein sequence ID" value="CAR04266.1"/>
    <property type="molecule type" value="Genomic_DNA"/>
</dbReference>
<dbReference type="RefSeq" id="WP_001090357.1">
    <property type="nucleotide sequence ID" value="NC_011742.1"/>
</dbReference>
<dbReference type="SMR" id="B7MKM5"/>
<dbReference type="KEGG" id="ecz:ECS88_3022"/>
<dbReference type="HOGENOM" id="CLU_007265_5_2_6"/>
<dbReference type="UniPathway" id="UPA00140">
    <property type="reaction ID" value="UER00204"/>
</dbReference>
<dbReference type="Proteomes" id="UP000000747">
    <property type="component" value="Chromosome"/>
</dbReference>
<dbReference type="GO" id="GO:0005524">
    <property type="term" value="F:ATP binding"/>
    <property type="evidence" value="ECO:0007669"/>
    <property type="project" value="UniProtKB-KW"/>
</dbReference>
<dbReference type="GO" id="GO:0005525">
    <property type="term" value="F:GTP binding"/>
    <property type="evidence" value="ECO:0007669"/>
    <property type="project" value="UniProtKB-UniRule"/>
</dbReference>
<dbReference type="GO" id="GO:0003924">
    <property type="term" value="F:GTPase activity"/>
    <property type="evidence" value="ECO:0007669"/>
    <property type="project" value="InterPro"/>
</dbReference>
<dbReference type="GO" id="GO:0004781">
    <property type="term" value="F:sulfate adenylyltransferase (ATP) activity"/>
    <property type="evidence" value="ECO:0007669"/>
    <property type="project" value="UniProtKB-UniRule"/>
</dbReference>
<dbReference type="GO" id="GO:0070814">
    <property type="term" value="P:hydrogen sulfide biosynthetic process"/>
    <property type="evidence" value="ECO:0007669"/>
    <property type="project" value="UniProtKB-UniRule"/>
</dbReference>
<dbReference type="GO" id="GO:0000103">
    <property type="term" value="P:sulfate assimilation"/>
    <property type="evidence" value="ECO:0007669"/>
    <property type="project" value="UniProtKB-UniRule"/>
</dbReference>
<dbReference type="CDD" id="cd04166">
    <property type="entry name" value="CysN_ATPS"/>
    <property type="match status" value="1"/>
</dbReference>
<dbReference type="CDD" id="cd03695">
    <property type="entry name" value="CysN_NodQ_II"/>
    <property type="match status" value="1"/>
</dbReference>
<dbReference type="CDD" id="cd04095">
    <property type="entry name" value="CysN_NoDQ_III"/>
    <property type="match status" value="1"/>
</dbReference>
<dbReference type="FunFam" id="2.40.30.10:FF:000027">
    <property type="entry name" value="Sulfate adenylyltransferase subunit 1"/>
    <property type="match status" value="1"/>
</dbReference>
<dbReference type="FunFam" id="2.40.30.10:FF:000031">
    <property type="entry name" value="Sulfate adenylyltransferase subunit 1"/>
    <property type="match status" value="1"/>
</dbReference>
<dbReference type="FunFam" id="3.40.50.300:FF:000119">
    <property type="entry name" value="Sulfate adenylyltransferase subunit 1"/>
    <property type="match status" value="1"/>
</dbReference>
<dbReference type="Gene3D" id="3.40.50.300">
    <property type="entry name" value="P-loop containing nucleotide triphosphate hydrolases"/>
    <property type="match status" value="1"/>
</dbReference>
<dbReference type="Gene3D" id="2.40.30.10">
    <property type="entry name" value="Translation factors"/>
    <property type="match status" value="2"/>
</dbReference>
<dbReference type="HAMAP" id="MF_00062">
    <property type="entry name" value="Sulf_adenylyltr_sub1"/>
    <property type="match status" value="1"/>
</dbReference>
<dbReference type="InterPro" id="IPR041757">
    <property type="entry name" value="CysN_GTP-bd"/>
</dbReference>
<dbReference type="InterPro" id="IPR044138">
    <property type="entry name" value="CysN_II"/>
</dbReference>
<dbReference type="InterPro" id="IPR044139">
    <property type="entry name" value="CysN_NoDQ_III"/>
</dbReference>
<dbReference type="InterPro" id="IPR031157">
    <property type="entry name" value="G_TR_CS"/>
</dbReference>
<dbReference type="InterPro" id="IPR054696">
    <property type="entry name" value="GTP-eEF1A_C"/>
</dbReference>
<dbReference type="InterPro" id="IPR027417">
    <property type="entry name" value="P-loop_NTPase"/>
</dbReference>
<dbReference type="InterPro" id="IPR005225">
    <property type="entry name" value="Small_GTP-bd"/>
</dbReference>
<dbReference type="InterPro" id="IPR011779">
    <property type="entry name" value="SO4_adenylTrfase_lsu"/>
</dbReference>
<dbReference type="InterPro" id="IPR000795">
    <property type="entry name" value="T_Tr_GTP-bd_dom"/>
</dbReference>
<dbReference type="InterPro" id="IPR050100">
    <property type="entry name" value="TRAFAC_GTPase_members"/>
</dbReference>
<dbReference type="InterPro" id="IPR009000">
    <property type="entry name" value="Transl_B-barrel_sf"/>
</dbReference>
<dbReference type="InterPro" id="IPR009001">
    <property type="entry name" value="Transl_elong_EF1A/Init_IF2_C"/>
</dbReference>
<dbReference type="NCBIfam" id="TIGR02034">
    <property type="entry name" value="CysN"/>
    <property type="match status" value="1"/>
</dbReference>
<dbReference type="NCBIfam" id="NF003478">
    <property type="entry name" value="PRK05124.1"/>
    <property type="match status" value="1"/>
</dbReference>
<dbReference type="NCBIfam" id="TIGR00231">
    <property type="entry name" value="small_GTP"/>
    <property type="match status" value="1"/>
</dbReference>
<dbReference type="PANTHER" id="PTHR23115">
    <property type="entry name" value="TRANSLATION FACTOR"/>
    <property type="match status" value="1"/>
</dbReference>
<dbReference type="Pfam" id="PF22594">
    <property type="entry name" value="GTP-eEF1A_C"/>
    <property type="match status" value="1"/>
</dbReference>
<dbReference type="Pfam" id="PF00009">
    <property type="entry name" value="GTP_EFTU"/>
    <property type="match status" value="1"/>
</dbReference>
<dbReference type="PRINTS" id="PR00315">
    <property type="entry name" value="ELONGATNFCT"/>
</dbReference>
<dbReference type="SUPFAM" id="SSF50465">
    <property type="entry name" value="EF-Tu/eEF-1alpha/eIF2-gamma C-terminal domain"/>
    <property type="match status" value="1"/>
</dbReference>
<dbReference type="SUPFAM" id="SSF52540">
    <property type="entry name" value="P-loop containing nucleoside triphosphate hydrolases"/>
    <property type="match status" value="1"/>
</dbReference>
<dbReference type="SUPFAM" id="SSF50447">
    <property type="entry name" value="Translation proteins"/>
    <property type="match status" value="1"/>
</dbReference>
<dbReference type="PROSITE" id="PS00301">
    <property type="entry name" value="G_TR_1"/>
    <property type="match status" value="1"/>
</dbReference>
<dbReference type="PROSITE" id="PS51722">
    <property type="entry name" value="G_TR_2"/>
    <property type="match status" value="1"/>
</dbReference>